<proteinExistence type="inferred from homology"/>
<gene>
    <name evidence="2" type="primary">C</name>
</gene>
<name>HBEAG_HBVH3</name>
<feature type="signal peptide" evidence="2">
    <location>
        <begin position="1"/>
        <end position="19"/>
    </location>
</feature>
<feature type="chain" id="PRO_0000324738" description="External core antigen" evidence="2">
    <location>
        <begin position="20"/>
        <end position="212"/>
    </location>
</feature>
<feature type="propeptide" id="PRO_0000324739" evidence="1">
    <location>
        <begin position="184"/>
        <end position="212"/>
    </location>
</feature>
<feature type="repeat" description="1; half-length">
    <location>
        <begin position="184"/>
        <end position="190"/>
    </location>
</feature>
<feature type="repeat" description="2">
    <location>
        <begin position="191"/>
        <end position="198"/>
    </location>
</feature>
<feature type="repeat" description="3">
    <location>
        <begin position="199"/>
        <end position="206"/>
    </location>
</feature>
<feature type="region of interest" description="HBEAG" evidence="2">
    <location>
        <begin position="25"/>
        <end position="27"/>
    </location>
</feature>
<feature type="region of interest" description="Disordered" evidence="3">
    <location>
        <begin position="165"/>
        <end position="212"/>
    </location>
</feature>
<feature type="region of interest" description="3 X 8 AA repeats of S-P-R-R-R-R-S-Q">
    <location>
        <begin position="184"/>
        <end position="206"/>
    </location>
</feature>
<feature type="compositionally biased region" description="Basic residues" evidence="3">
    <location>
        <begin position="180"/>
        <end position="205"/>
    </location>
</feature>
<feature type="disulfide bond" description="Interchain" evidence="2">
    <location>
        <position position="77"/>
    </location>
</feature>
<feature type="disulfide bond" description="Interchain" evidence="2">
    <location>
        <position position="90"/>
    </location>
</feature>
<evidence type="ECO:0000250" key="1"/>
<evidence type="ECO:0000255" key="2">
    <source>
        <dbReference type="HAMAP-Rule" id="MF_04076"/>
    </source>
</evidence>
<evidence type="ECO:0000256" key="3">
    <source>
        <dbReference type="SAM" id="MobiDB-lite"/>
    </source>
</evidence>
<keyword id="KW-0024">Alternative initiation</keyword>
<keyword id="KW-1015">Disulfide bond</keyword>
<keyword id="KW-1048">Host nucleus</keyword>
<keyword id="KW-0945">Host-virus interaction</keyword>
<keyword id="KW-0677">Repeat</keyword>
<keyword id="KW-0964">Secreted</keyword>
<keyword id="KW-0732">Signal</keyword>
<keyword id="KW-0899">Viral immunoevasion</keyword>
<dbReference type="EMBL" id="AY090457">
    <property type="protein sequence ID" value="AAM09051.1"/>
    <property type="molecule type" value="Genomic_DNA"/>
</dbReference>
<dbReference type="SMR" id="Q8JMZ4"/>
<dbReference type="Proteomes" id="UP000007409">
    <property type="component" value="Segment"/>
</dbReference>
<dbReference type="GO" id="GO:0005576">
    <property type="term" value="C:extracellular region"/>
    <property type="evidence" value="ECO:0007669"/>
    <property type="project" value="UniProtKB-SubCell"/>
</dbReference>
<dbReference type="GO" id="GO:0043657">
    <property type="term" value="C:host cell"/>
    <property type="evidence" value="ECO:0007669"/>
    <property type="project" value="GOC"/>
</dbReference>
<dbReference type="GO" id="GO:0030430">
    <property type="term" value="C:host cell cytoplasm"/>
    <property type="evidence" value="ECO:0007669"/>
    <property type="project" value="UniProtKB-UniRule"/>
</dbReference>
<dbReference type="GO" id="GO:0042025">
    <property type="term" value="C:host cell nucleus"/>
    <property type="evidence" value="ECO:0007669"/>
    <property type="project" value="UniProtKB-SubCell"/>
</dbReference>
<dbReference type="GO" id="GO:0039619">
    <property type="term" value="C:T=4 icosahedral viral capsid"/>
    <property type="evidence" value="ECO:0007669"/>
    <property type="project" value="UniProtKB-UniRule"/>
</dbReference>
<dbReference type="GO" id="GO:0003677">
    <property type="term" value="F:DNA binding"/>
    <property type="evidence" value="ECO:0007669"/>
    <property type="project" value="UniProtKB-UniRule"/>
</dbReference>
<dbReference type="GO" id="GO:0003723">
    <property type="term" value="F:RNA binding"/>
    <property type="evidence" value="ECO:0007669"/>
    <property type="project" value="UniProtKB-UniRule"/>
</dbReference>
<dbReference type="GO" id="GO:0005198">
    <property type="term" value="F:structural molecule activity"/>
    <property type="evidence" value="ECO:0007669"/>
    <property type="project" value="UniProtKB-UniRule"/>
</dbReference>
<dbReference type="GO" id="GO:0075521">
    <property type="term" value="P:microtubule-dependent intracellular transport of viral material towards nucleus"/>
    <property type="evidence" value="ECO:0007669"/>
    <property type="project" value="UniProtKB-UniRule"/>
</dbReference>
<dbReference type="GO" id="GO:0046718">
    <property type="term" value="P:symbiont entry into host cell"/>
    <property type="evidence" value="ECO:0007669"/>
    <property type="project" value="UniProtKB-UniRule"/>
</dbReference>
<dbReference type="GO" id="GO:0075732">
    <property type="term" value="P:viral penetration into host nucleus"/>
    <property type="evidence" value="ECO:0007669"/>
    <property type="project" value="UniProtKB-UniRule"/>
</dbReference>
<dbReference type="FunFam" id="1.10.4090.10:FF:000001">
    <property type="entry name" value="Capsid protein"/>
    <property type="match status" value="1"/>
</dbReference>
<dbReference type="Gene3D" id="1.10.4090.10">
    <property type="entry name" value="Viral capsid, core domain supefamily, Hepatitis B virus"/>
    <property type="match status" value="1"/>
</dbReference>
<dbReference type="HAMAP" id="MF_04076">
    <property type="entry name" value="HBV_HBEAG"/>
    <property type="match status" value="1"/>
</dbReference>
<dbReference type="InterPro" id="IPR013195">
    <property type="entry name" value="Hepatitis_B_virus_capsid_N"/>
</dbReference>
<dbReference type="InterPro" id="IPR002006">
    <property type="entry name" value="Hepatitis_core"/>
</dbReference>
<dbReference type="InterPro" id="IPR036459">
    <property type="entry name" value="Viral_capsid_core_dom_sf_HBV"/>
</dbReference>
<dbReference type="Pfam" id="PF08290">
    <property type="entry name" value="Hep_core_N"/>
    <property type="match status" value="1"/>
</dbReference>
<dbReference type="Pfam" id="PF00906">
    <property type="entry name" value="Hepatitis_core"/>
    <property type="match status" value="3"/>
</dbReference>
<dbReference type="SUPFAM" id="SSF47852">
    <property type="entry name" value="Hepatitis B viral capsid (hbcag)"/>
    <property type="match status" value="1"/>
</dbReference>
<reference key="1">
    <citation type="journal article" date="2002" name="J. Gen. Virol.">
        <title>Genotype H: a new Amerindian genotype of hepatitis B virus revealed in Central America.</title>
        <authorList>
            <person name="Arauz-Ruiz P."/>
            <person name="Norder H."/>
            <person name="Robertson B.H."/>
            <person name="Magnius L.O."/>
        </authorList>
    </citation>
    <scope>NUCLEOTIDE SEQUENCE [GENOMIC DNA]</scope>
</reference>
<sequence length="212" mass="24176">MQLFHLCLIIFCSCPTVQASKLCLGWLWGMDIDPYKEFGASVELLSFLPSDFFPSVRDLLDTASALYRDALESPEHCTPNHTALRQAILCWGELMTLASWVGNNLEDPAARDLVVNYVNTNMGLKIRQLLWFHISCLTFGRDTVLEYLVSFGVWIRTPPAYRPPNAPILSTLPETTVVRQRGRAPRRRTPSPRRRRSQSPRRRRSQSPASQC</sequence>
<organism>
    <name type="scientific">Hepatitis B virus genotype H subtype adw4 (isolate Nicaragua/2928Nic/1997)</name>
    <name type="common">HBV-H</name>
    <dbReference type="NCBI Taxonomy" id="489541"/>
    <lineage>
        <taxon>Viruses</taxon>
        <taxon>Riboviria</taxon>
        <taxon>Pararnavirae</taxon>
        <taxon>Artverviricota</taxon>
        <taxon>Revtraviricetes</taxon>
        <taxon>Blubervirales</taxon>
        <taxon>Hepadnaviridae</taxon>
        <taxon>Orthohepadnavirus</taxon>
        <taxon>Hepatitis B virus</taxon>
        <taxon>hepatitis B virus genotype H</taxon>
    </lineage>
</organism>
<accession>Q8JMZ4</accession>
<comment type="function">
    <text evidence="2">May regulate immune response to the intracellular capsid in acting as a T-cell tolerogen, by having an immunoregulatory effect which prevents destruction of infected cells by cytotoxic T-cells. This immune regulation may predispose to chronicity during perinatal infections and prevent severe liver injury during adult infections.</text>
</comment>
<comment type="subunit">
    <text evidence="2">Homodimerizes.</text>
</comment>
<comment type="subcellular location">
    <subcellularLocation>
        <location evidence="2">Secreted</location>
    </subcellularLocation>
    <subcellularLocation>
        <location evidence="2">Host nucleus</location>
    </subcellularLocation>
</comment>
<comment type="alternative products">
    <event type="alternative initiation"/>
    <isoform>
        <id>Q8JMZ4-1</id>
        <name>External core antigen</name>
        <sequence type="displayed"/>
    </isoform>
    <isoform>
        <id>P0C6I6-1</id>
        <name>Capsid protein</name>
        <sequence type="external"/>
    </isoform>
</comment>
<comment type="PTM">
    <text evidence="2">Phosphorylated.</text>
</comment>
<comment type="PTM">
    <text evidence="2">Cleaved by host furin.</text>
</comment>
<comment type="similarity">
    <text evidence="2">Belongs to the orthohepadnavirus precore antigen family.</text>
</comment>
<protein>
    <recommendedName>
        <fullName evidence="2">External core antigen</fullName>
    </recommendedName>
    <alternativeName>
        <fullName evidence="2">HBeAg</fullName>
    </alternativeName>
    <alternativeName>
        <fullName evidence="2">Precore protein</fullName>
    </alternativeName>
    <alternativeName>
        <fullName evidence="2">p25</fullName>
    </alternativeName>
</protein>
<organismHost>
    <name type="scientific">Homo sapiens</name>
    <name type="common">Human</name>
    <dbReference type="NCBI Taxonomy" id="9606"/>
</organismHost>
<organismHost>
    <name type="scientific">Pan troglodytes</name>
    <name type="common">Chimpanzee</name>
    <dbReference type="NCBI Taxonomy" id="9598"/>
</organismHost>